<dbReference type="EC" id="1.14.-.-"/>
<dbReference type="EMBL" id="AF227531">
    <property type="protein sequence ID" value="AAG36792.1"/>
    <property type="molecule type" value="mRNA"/>
</dbReference>
<dbReference type="SMR" id="Q9GQM9"/>
<dbReference type="GO" id="GO:0005789">
    <property type="term" value="C:endoplasmic reticulum membrane"/>
    <property type="evidence" value="ECO:0007669"/>
    <property type="project" value="UniProtKB-SubCell"/>
</dbReference>
<dbReference type="GO" id="GO:0020037">
    <property type="term" value="F:heme binding"/>
    <property type="evidence" value="ECO:0007669"/>
    <property type="project" value="InterPro"/>
</dbReference>
<dbReference type="GO" id="GO:0005506">
    <property type="term" value="F:iron ion binding"/>
    <property type="evidence" value="ECO:0007669"/>
    <property type="project" value="InterPro"/>
</dbReference>
<dbReference type="GO" id="GO:0004497">
    <property type="term" value="F:monooxygenase activity"/>
    <property type="evidence" value="ECO:0007669"/>
    <property type="project" value="UniProtKB-KW"/>
</dbReference>
<dbReference type="GO" id="GO:0016705">
    <property type="term" value="F:oxidoreductase activity, acting on paired donors, with incorporation or reduction of molecular oxygen"/>
    <property type="evidence" value="ECO:0007669"/>
    <property type="project" value="InterPro"/>
</dbReference>
<dbReference type="CDD" id="cd11056">
    <property type="entry name" value="CYP6-like"/>
    <property type="match status" value="1"/>
</dbReference>
<dbReference type="FunFam" id="1.10.630.10:FF:000042">
    <property type="entry name" value="Cytochrome P450"/>
    <property type="match status" value="1"/>
</dbReference>
<dbReference type="Gene3D" id="1.10.630.10">
    <property type="entry name" value="Cytochrome P450"/>
    <property type="match status" value="1"/>
</dbReference>
<dbReference type="InterPro" id="IPR001128">
    <property type="entry name" value="Cyt_P450"/>
</dbReference>
<dbReference type="InterPro" id="IPR017972">
    <property type="entry name" value="Cyt_P450_CS"/>
</dbReference>
<dbReference type="InterPro" id="IPR002401">
    <property type="entry name" value="Cyt_P450_E_grp-I"/>
</dbReference>
<dbReference type="InterPro" id="IPR036396">
    <property type="entry name" value="Cyt_P450_sf"/>
</dbReference>
<dbReference type="InterPro" id="IPR050476">
    <property type="entry name" value="Insect_CytP450_Detox"/>
</dbReference>
<dbReference type="PANTHER" id="PTHR24292">
    <property type="entry name" value="CYTOCHROME P450"/>
    <property type="match status" value="1"/>
</dbReference>
<dbReference type="PANTHER" id="PTHR24292:SF45">
    <property type="entry name" value="CYTOCHROME P450 6G1-RELATED"/>
    <property type="match status" value="1"/>
</dbReference>
<dbReference type="Pfam" id="PF00067">
    <property type="entry name" value="p450"/>
    <property type="match status" value="1"/>
</dbReference>
<dbReference type="PRINTS" id="PR00463">
    <property type="entry name" value="EP450I"/>
</dbReference>
<dbReference type="PRINTS" id="PR00385">
    <property type="entry name" value="P450"/>
</dbReference>
<dbReference type="SUPFAM" id="SSF48264">
    <property type="entry name" value="Cytochrome P450"/>
    <property type="match status" value="1"/>
</dbReference>
<dbReference type="PROSITE" id="PS00086">
    <property type="entry name" value="CYTOCHROME_P450"/>
    <property type="match status" value="1"/>
</dbReference>
<proteinExistence type="evidence at transcript level"/>
<evidence type="ECO:0000250" key="1"/>
<evidence type="ECO:0000269" key="2">
    <source>
    </source>
</evidence>
<evidence type="ECO:0000305" key="3"/>
<sequence length="503" mass="57163">MTLVDWFLDTIALLLGLLHIWIARHFQHWEEKGVHHVAPQPLVGSMLRLLTFSVSPAVFIQGVHEAAGSHPYIGFYIFGRPALLVRDPSLLQHILVKDFSNFTDRLTSSNKHKDPVGAANLFCIKGNRWRQIRACITHTFSTARLKIMFSRVLNSASVTRDYILERGNQPINVKDLFVRTSLDSMCSTLFGIESSTLYNSEAQFLHYGHKMMRWTPYRALEALAHFFSPELLNVFDTRLFECESTEFLINAFSEAITEREKTGLYCSDLVDSLIQLKKQLIDVSEHEVLGQAMLFFAAGFETTSSAMAFAMYELALHPEIQDRLRTEIQEVTACHGGQVTYEGVKKMSYLDMVVSEVLRKYPPMSFIDRVCLHDYHIPGTDVVIEKGTPIFVSLLGLHRDSIFYPDPEDFNPERFNKEKKSGVHPFSYIPFGDGPRNCIGLRLGLMSVKLVIIMLLQSLRVETHESTPVPLQLSPYVLFLKNLGRLPLMFVPIGEDNVETSLA</sequence>
<keyword id="KW-0256">Endoplasmic reticulum</keyword>
<keyword id="KW-0349">Heme</keyword>
<keyword id="KW-0408">Iron</keyword>
<keyword id="KW-0472">Membrane</keyword>
<keyword id="KW-0479">Metal-binding</keyword>
<keyword id="KW-0492">Microsome</keyword>
<keyword id="KW-0503">Monooxygenase</keyword>
<keyword id="KW-0560">Oxidoreductase</keyword>
<comment type="cofactor">
    <cofactor evidence="1">
        <name>heme</name>
        <dbReference type="ChEBI" id="CHEBI:30413"/>
    </cofactor>
</comment>
<comment type="subcellular location">
    <subcellularLocation>
        <location evidence="3">Endoplasmic reticulum membrane</location>
        <topology evidence="3">Peripheral membrane protein</topology>
    </subcellularLocation>
    <subcellularLocation>
        <location evidence="3">Microsome membrane</location>
        <topology evidence="3">Peripheral membrane protein</topology>
    </subcellularLocation>
</comment>
<comment type="tissue specificity">
    <text evidence="2">Detected only in testes and accessory glands of male adults.</text>
</comment>
<comment type="developmental stage">
    <text evidence="2">Detected only in male adults.</text>
</comment>
<comment type="similarity">
    <text evidence="3">Belongs to the cytochrome P450 family.</text>
</comment>
<organism>
    <name type="scientific">Blattella germanica</name>
    <name type="common">German cockroach</name>
    <name type="synonym">Blatta germanica</name>
    <dbReference type="NCBI Taxonomy" id="6973"/>
    <lineage>
        <taxon>Eukaryota</taxon>
        <taxon>Metazoa</taxon>
        <taxon>Ecdysozoa</taxon>
        <taxon>Arthropoda</taxon>
        <taxon>Hexapoda</taxon>
        <taxon>Insecta</taxon>
        <taxon>Pterygota</taxon>
        <taxon>Neoptera</taxon>
        <taxon>Polyneoptera</taxon>
        <taxon>Dictyoptera</taxon>
        <taxon>Blattodea</taxon>
        <taxon>Blaberoidea</taxon>
        <taxon>Blattellidae</taxon>
        <taxon>Blattella</taxon>
    </lineage>
</organism>
<reference key="1">
    <citation type="journal article" date="2001" name="Insect Biochem. Mol. Biol.">
        <title>Cytochrome P450 CYP6L1 is specifically expressed in the reproductive tissues of adult male German cockroaches, Blattella germanica (L.).</title>
        <authorList>
            <person name="Wen Z."/>
            <person name="Scott J.G."/>
        </authorList>
    </citation>
    <scope>NUCLEOTIDE SEQUENCE [MRNA]</scope>
    <scope>TISSUE SPECIFICITY</scope>
    <scope>DEVELOPMENTAL STAGE</scope>
</reference>
<protein>
    <recommendedName>
        <fullName>Cytochrome P450 6l1</fullName>
        <ecNumber>1.14.-.-</ecNumber>
    </recommendedName>
    <alternativeName>
        <fullName>CYPVIL1</fullName>
    </alternativeName>
</protein>
<accession>Q9GQM9</accession>
<gene>
    <name type="primary">CYP6L1</name>
</gene>
<name>CP6L1_BLAGE</name>
<feature type="chain" id="PRO_0000051887" description="Cytochrome P450 6l1">
    <location>
        <begin position="1"/>
        <end position="503"/>
    </location>
</feature>
<feature type="binding site" description="axial binding residue" evidence="1">
    <location>
        <position position="438"/>
    </location>
    <ligand>
        <name>heme</name>
        <dbReference type="ChEBI" id="CHEBI:30413"/>
    </ligand>
    <ligandPart>
        <name>Fe</name>
        <dbReference type="ChEBI" id="CHEBI:18248"/>
    </ligandPart>
</feature>